<keyword id="KW-0002">3D-structure</keyword>
<keyword id="KW-0903">Direct protein sequencing</keyword>
<keyword id="KW-0238">DNA-binding</keyword>
<keyword id="KW-0244">Early protein</keyword>
<keyword id="KW-1035">Host cytoplasm</keyword>
<keyword id="KW-0670">Pyruvate</keyword>
<keyword id="KW-1185">Reference proteome</keyword>
<keyword id="KW-0678">Repressor</keyword>
<keyword id="KW-0804">Transcription</keyword>
<keyword id="KW-0805">Transcription regulation</keyword>
<evidence type="ECO:0000269" key="1">
    <source>
    </source>
</evidence>
<evidence type="ECO:0000269" key="2">
    <source>
    </source>
</evidence>
<evidence type="ECO:0000269" key="3">
    <source>
    </source>
</evidence>
<evidence type="ECO:0000305" key="4"/>
<evidence type="ECO:0007829" key="5">
    <source>
        <dbReference type="PDB" id="1NEQ"/>
    </source>
</evidence>
<name>NER_BPMU</name>
<comment type="function">
    <text evidence="3">Switches off the PcM promoter thereby blocking expression of the major repressor Repc (latency factor) and favoring transcription from the early promoter (Pe) and hence viral transposition and lytic development. Negatively regulates the early promoter (Pe) thereby controlling its own expression and keeping the level of early genes expression independent of the viral genome copy number.</text>
</comment>
<comment type="subcellular location">
    <subcellularLocation>
        <location evidence="4">Host cytoplasm</location>
    </subcellularLocation>
</comment>
<comment type="induction">
    <text evidence="1">Expressed in the early phase of the viral replicative cycle. Early gene transcription is repressed by viral Repc (latency) and favored by viral Ner protein (lytic development).</text>
</comment>
<comment type="similarity">
    <text evidence="4">Belongs to the ner transcriptional regulatory family.</text>
</comment>
<proteinExistence type="evidence at protein level"/>
<dbReference type="EMBL" id="V01464">
    <property type="protein sequence ID" value="CAA24712.1"/>
    <property type="molecule type" value="Genomic_DNA"/>
</dbReference>
<dbReference type="EMBL" id="M64097">
    <property type="protein sequence ID" value="AAA32378.1"/>
    <property type="molecule type" value="Genomic_DNA"/>
</dbReference>
<dbReference type="EMBL" id="AF083977">
    <property type="protein sequence ID" value="AAF01082.1"/>
    <property type="molecule type" value="Genomic_DNA"/>
</dbReference>
<dbReference type="EMBL" id="V00868">
    <property type="protein sequence ID" value="CAA24235.1"/>
    <property type="molecule type" value="Genomic_DNA"/>
</dbReference>
<dbReference type="PIR" id="S09549">
    <property type="entry name" value="DNBPNU"/>
</dbReference>
<dbReference type="RefSeq" id="NP_050606.1">
    <property type="nucleotide sequence ID" value="NC_000929.1"/>
</dbReference>
<dbReference type="PDB" id="1NEQ">
    <property type="method" value="NMR"/>
    <property type="chains" value="A=2-75"/>
</dbReference>
<dbReference type="PDB" id="1NER">
    <property type="method" value="NMR"/>
    <property type="chains" value="A=2-75"/>
</dbReference>
<dbReference type="PDBsum" id="1NEQ"/>
<dbReference type="PDBsum" id="1NER"/>
<dbReference type="BMRB" id="P06020"/>
<dbReference type="SMR" id="P06020"/>
<dbReference type="GeneID" id="2636289"/>
<dbReference type="KEGG" id="vg:2636289"/>
<dbReference type="EvolutionaryTrace" id="P06020"/>
<dbReference type="Proteomes" id="UP000002611">
    <property type="component" value="Genome"/>
</dbReference>
<dbReference type="Proteomes" id="UP000401936">
    <property type="component" value="Segment"/>
</dbReference>
<dbReference type="GO" id="GO:0030430">
    <property type="term" value="C:host cell cytoplasm"/>
    <property type="evidence" value="ECO:0007669"/>
    <property type="project" value="UniProtKB-SubCell"/>
</dbReference>
<dbReference type="GO" id="GO:0017053">
    <property type="term" value="C:transcription repressor complex"/>
    <property type="evidence" value="ECO:0000314"/>
    <property type="project" value="UniProtKB"/>
</dbReference>
<dbReference type="GO" id="GO:0003677">
    <property type="term" value="F:DNA binding"/>
    <property type="evidence" value="ECO:0007669"/>
    <property type="project" value="UniProtKB-KW"/>
</dbReference>
<dbReference type="FunFam" id="1.10.260.40:FF:000017">
    <property type="entry name" value="DNA-binding transcriptional regulator SfsB"/>
    <property type="match status" value="1"/>
</dbReference>
<dbReference type="Gene3D" id="1.10.260.40">
    <property type="entry name" value="lambda repressor-like DNA-binding domains"/>
    <property type="match status" value="1"/>
</dbReference>
<dbReference type="InterPro" id="IPR010982">
    <property type="entry name" value="Lambda_DNA-bd_dom_sf"/>
</dbReference>
<dbReference type="InterPro" id="IPR038722">
    <property type="entry name" value="Ner_HTH_dom"/>
</dbReference>
<dbReference type="Pfam" id="PF13693">
    <property type="entry name" value="HTH_35"/>
    <property type="match status" value="1"/>
</dbReference>
<dbReference type="SUPFAM" id="SSF47413">
    <property type="entry name" value="lambda repressor-like DNA-binding domains"/>
    <property type="match status" value="1"/>
</dbReference>
<protein>
    <recommendedName>
        <fullName>Negative regulator of transcription</fullName>
        <shortName>Ner</shortName>
    </recommendedName>
    <alternativeName>
        <fullName>Gene product 2</fullName>
        <shortName>gp2</shortName>
    </alternativeName>
</protein>
<organismHost>
    <name type="scientific">Enterobacteriaceae</name>
    <dbReference type="NCBI Taxonomy" id="543"/>
</organismHost>
<feature type="initiator methionine" description="Removed; by host" evidence="2">
    <location>
        <position position="1"/>
    </location>
</feature>
<feature type="chain" id="PRO_0000062784" description="Negative regulator of transcription">
    <location>
        <begin position="2"/>
        <end position="75"/>
    </location>
</feature>
<feature type="DNA-binding region" description="H-T-H motif" evidence="4">
    <location>
        <begin position="26"/>
        <end position="45"/>
    </location>
</feature>
<feature type="modified residue" description="N-pyruvate 2-iminyl-cysteine; by host">
    <location>
        <position position="2"/>
    </location>
</feature>
<feature type="strand" evidence="5">
    <location>
        <begin position="5"/>
        <end position="9"/>
    </location>
</feature>
<feature type="helix" evidence="5">
    <location>
        <begin position="12"/>
        <end position="20"/>
    </location>
</feature>
<feature type="helix" evidence="5">
    <location>
        <begin position="26"/>
        <end position="33"/>
    </location>
</feature>
<feature type="helix" evidence="5">
    <location>
        <begin position="37"/>
        <end position="42"/>
    </location>
</feature>
<feature type="turn" evidence="5">
    <location>
        <begin position="43"/>
        <end position="45"/>
    </location>
</feature>
<feature type="helix" evidence="5">
    <location>
        <begin position="49"/>
        <end position="58"/>
    </location>
</feature>
<feature type="helix" evidence="5">
    <location>
        <begin position="63"/>
        <end position="66"/>
    </location>
</feature>
<feature type="turn" evidence="5">
    <location>
        <begin position="68"/>
        <end position="70"/>
    </location>
</feature>
<organism>
    <name type="scientific">Escherichia phage Mu</name>
    <name type="common">Bacteriophage Mu</name>
    <dbReference type="NCBI Taxonomy" id="2681603"/>
    <lineage>
        <taxon>Viruses</taxon>
        <taxon>Duplodnaviria</taxon>
        <taxon>Heunggongvirae</taxon>
        <taxon>Uroviricota</taxon>
        <taxon>Caudoviricetes</taxon>
        <taxon>Muvirus</taxon>
        <taxon>Muvirus mu</taxon>
    </lineage>
</organism>
<accession>P06020</accession>
<gene>
    <name type="primary">ner</name>
    <name type="synonym">CII</name>
    <name type="ordered locus">Mup02</name>
</gene>
<reference key="1">
    <citation type="journal article" date="1982" name="Mol. Gen. Genet.">
        <title>Nucleotide sequence of the immunity region of bacteriophage Mu.</title>
        <authorList>
            <person name="Priess H."/>
            <person name="Kamp D."/>
            <person name="Kahmann R."/>
            <person name="Braeuer B."/>
            <person name="Delius H."/>
        </authorList>
    </citation>
    <scope>NUCLEOTIDE SEQUENCE [GENOMIC DNA]</scope>
</reference>
<reference key="2">
    <citation type="book" date="1987" name="Phage Mu">
        <title>Sequence of the left end of Mu.</title>
        <editorList>
            <person name="Symonds N."/>
            <person name="Toussaint A."/>
            <person name="van de Putte P."/>
            <person name="Howe M.M."/>
        </editorList>
        <authorList>
            <person name="Priess H."/>
            <person name="Brauer B."/>
            <person name="Schmidt C."/>
            <person name="Kamp D."/>
        </authorList>
    </citation>
    <scope>NUCLEOTIDE SEQUENCE [GENOMIC DNA]</scope>
</reference>
<reference key="3">
    <citation type="journal article" date="2002" name="J. Mol. Biol.">
        <title>Bacteriophage Mu genome sequence: analysis and comparison with Mu-like prophages in Haemophilus, Neisseria and Deinococcus.</title>
        <authorList>
            <person name="Morgan G.J."/>
            <person name="Hatfull G.F."/>
            <person name="Casjens S."/>
            <person name="Hendrix R.W."/>
        </authorList>
    </citation>
    <scope>NUCLEOTIDE SEQUENCE [LARGE SCALE GENOMIC DNA]</scope>
</reference>
<reference key="4">
    <citation type="journal article" date="1988" name="Gene">
        <title>Purification and characterization of the DNA-binding protein Ner of bacteriophage Mu.</title>
        <authorList>
            <person name="Allet B."/>
            <person name="Payton M."/>
            <person name="Mattaliano R.J."/>
            <person name="Gronenborn A.M."/>
            <person name="Clore G.M."/>
            <person name="Wingfield P.T."/>
        </authorList>
    </citation>
    <scope>PROTEIN SEQUENCE OF 2-75</scope>
</reference>
<reference key="5">
    <citation type="journal article" date="1983" name="Mol. Gen. Genet.">
        <title>The products of gene A of the related phages Mu and D108 differ in their specificities.</title>
        <authorList>
            <person name="Toussaint A."/>
            <person name="Faelen M."/>
            <person name="Desmet L."/>
            <person name="Allet B."/>
        </authorList>
    </citation>
    <scope>NUCLEOTIDE SEQUENCE [GENOMIC DNA] OF 68-75</scope>
</reference>
<reference key="6">
    <citation type="journal article" date="1986" name="J. Bacteriol.">
        <title>Role of ner protein in bacteriophage Mu transposition.</title>
        <authorList>
            <person name="Goosen N."/>
            <person name="van de Putte P."/>
        </authorList>
    </citation>
    <scope>FUNCTION</scope>
</reference>
<reference key="7">
    <citation type="journal article" date="1989" name="FEBS Lett.">
        <title>Purification and characterization of the Ner repressor of bacteriophage Mu.</title>
        <authorList>
            <person name="Kukolj G."/>
            <person name="Tolias P.P."/>
            <person name="DuBow M.S."/>
        </authorList>
    </citation>
    <scope>CHARACTERIZATION</scope>
</reference>
<reference key="8">
    <citation type="journal article" date="1989" name="J. Bacteriol.">
        <title>Localization and regulation of bacteriophage Mu promoters.</title>
        <authorList>
            <person name="Stoddard S.F."/>
            <person name="Howe M.M."/>
        </authorList>
    </citation>
    <scope>INDUCTION</scope>
</reference>
<reference key="9">
    <citation type="journal article" date="1992" name="J. Biol. Chem.">
        <title>Pyruvic acid is attached through its central carbon atom to the amino terminus of the recombinant DNA-derived DNA-binding protein Ner of bacteriophage Mu.</title>
        <authorList>
            <person name="Rose K."/>
            <person name="Simona M.G."/>
            <person name="Savoy L.-A."/>
            <person name="Regamey P.-O."/>
            <person name="Green B.N."/>
            <person name="Clore G.M."/>
            <person name="Gronenborn A.M."/>
            <person name="Wingfield P.T."/>
        </authorList>
    </citation>
    <scope>POST-TRANSLATIONAL MODIFICATIONS</scope>
</reference>
<reference key="10">
    <citation type="journal article" date="1995" name="Biochemistry">
        <title>DNA binding specificity of the Mu Ner protein.</title>
        <authorList>
            <person name="Strzelecka T.E."/>
            <person name="Hayes J.J."/>
            <person name="Clore G.M."/>
            <person name="Gronenborn A.M."/>
        </authorList>
    </citation>
    <scope>DNA-BINDING</scope>
</reference>
<reference key="11">
    <citation type="journal article" date="1995" name="Structure">
        <title>The solution structure of the Mu Ner protein reveals a helix-turn-helix DNA recognition motif.</title>
        <authorList>
            <person name="Strzelecka T.E."/>
            <person name="Clore G.M."/>
            <person name="Gronenborn A.M."/>
        </authorList>
    </citation>
    <scope>STRUCTURE BY NMR</scope>
</reference>
<sequence>MCSNEKARDWHRADVIAGLKKRKLSLSALSRQFGYAPTTLANALERHWPKGEQIIANALETKPEVIWPSRYQAGE</sequence>